<sequence>MSIRNTINRIIIRRNMSDSIRHYDYLVIGGGSGGVASSRRAASYGAKTLLIEAKAMGGTCVNKGCVPKKVMWYASDLATRIGHAHSYNLFEDLPLTKENLTFNWPEFKKKRDAYIHRLNGIYERNLTKEGVDYVYGWASFTVDGKVQVKKADNCTETYTADHILVATGGKPIYPAKIPGYDYGVSSDEFFELEDQPKKVVVVGAGYIGVEIAGVFNGLGSDSHLVIRGETVLRKFDDCIQETVTDTYIKEGVNIHKSSNVTKVEKDESTGKLNIQLDTGKNIDNVDSLIWTIGRRSLLGLGLENIGVKLDAKEQIVVDEYQNSSVKNVYSLGDVVGKVELTPVAIAAGRKLSNRLFGPEKFKNQKQDYENVPSVVFSHPEAGSIGLSEREAIEKFGKDNVKVYNSKFNAMYYAMMEEKDKTPTRYKLVCTGEEEKVVGLHIIGDSSAEILQGFGVAIKMGATKADFDSCVAIHPTSAEELVTLT</sequence>
<gene>
    <name type="primary">GLR1</name>
    <name type="ordered locus">KLLA0E24112g</name>
</gene>
<dbReference type="EC" id="1.8.1.7"/>
<dbReference type="EMBL" id="AJ504414">
    <property type="protein sequence ID" value="CAD43213.1"/>
    <property type="molecule type" value="Genomic_DNA"/>
</dbReference>
<dbReference type="EMBL" id="CR382125">
    <property type="protein sequence ID" value="CAH00123.1"/>
    <property type="molecule type" value="Genomic_DNA"/>
</dbReference>
<dbReference type="RefSeq" id="XP_455036.1">
    <property type="nucleotide sequence ID" value="XM_455036.1"/>
</dbReference>
<dbReference type="SMR" id="Q6HA23"/>
<dbReference type="FunCoup" id="Q6HA23">
    <property type="interactions" value="1134"/>
</dbReference>
<dbReference type="STRING" id="284590.Q6HA23"/>
<dbReference type="PaxDb" id="284590-Q6HA23"/>
<dbReference type="KEGG" id="kla:KLLA0_E24069g"/>
<dbReference type="eggNOG" id="KOG0405">
    <property type="taxonomic scope" value="Eukaryota"/>
</dbReference>
<dbReference type="HOGENOM" id="CLU_016755_2_2_1"/>
<dbReference type="InParanoid" id="Q6HA23"/>
<dbReference type="OMA" id="MSKHYDY"/>
<dbReference type="Proteomes" id="UP000000598">
    <property type="component" value="Chromosome E"/>
</dbReference>
<dbReference type="GO" id="GO:0005829">
    <property type="term" value="C:cytosol"/>
    <property type="evidence" value="ECO:0007669"/>
    <property type="project" value="TreeGrafter"/>
</dbReference>
<dbReference type="GO" id="GO:0005739">
    <property type="term" value="C:mitochondrion"/>
    <property type="evidence" value="ECO:0007669"/>
    <property type="project" value="UniProtKB-SubCell"/>
</dbReference>
<dbReference type="GO" id="GO:0050660">
    <property type="term" value="F:flavin adenine dinucleotide binding"/>
    <property type="evidence" value="ECO:0007669"/>
    <property type="project" value="InterPro"/>
</dbReference>
<dbReference type="GO" id="GO:0004362">
    <property type="term" value="F:glutathione-disulfide reductase (NADPH) activity"/>
    <property type="evidence" value="ECO:0007669"/>
    <property type="project" value="UniProtKB-EC"/>
</dbReference>
<dbReference type="GO" id="GO:0050661">
    <property type="term" value="F:NADP binding"/>
    <property type="evidence" value="ECO:0007669"/>
    <property type="project" value="InterPro"/>
</dbReference>
<dbReference type="GO" id="GO:0045454">
    <property type="term" value="P:cell redox homeostasis"/>
    <property type="evidence" value="ECO:0007669"/>
    <property type="project" value="InterPro"/>
</dbReference>
<dbReference type="GO" id="GO:0034599">
    <property type="term" value="P:cellular response to oxidative stress"/>
    <property type="evidence" value="ECO:0007669"/>
    <property type="project" value="TreeGrafter"/>
</dbReference>
<dbReference type="GO" id="GO:0006749">
    <property type="term" value="P:glutathione metabolic process"/>
    <property type="evidence" value="ECO:0007669"/>
    <property type="project" value="InterPro"/>
</dbReference>
<dbReference type="FunFam" id="3.30.390.30:FF:000003">
    <property type="entry name" value="Glutathione reductase"/>
    <property type="match status" value="1"/>
</dbReference>
<dbReference type="FunFam" id="3.50.50.60:FF:000235">
    <property type="entry name" value="Glutathione reductase"/>
    <property type="match status" value="1"/>
</dbReference>
<dbReference type="Gene3D" id="3.30.390.30">
    <property type="match status" value="1"/>
</dbReference>
<dbReference type="Gene3D" id="3.50.50.60">
    <property type="entry name" value="FAD/NAD(P)-binding domain"/>
    <property type="match status" value="2"/>
</dbReference>
<dbReference type="InterPro" id="IPR036188">
    <property type="entry name" value="FAD/NAD-bd_sf"/>
</dbReference>
<dbReference type="InterPro" id="IPR023753">
    <property type="entry name" value="FAD/NAD-binding_dom"/>
</dbReference>
<dbReference type="InterPro" id="IPR016156">
    <property type="entry name" value="FAD/NAD-linked_Rdtase_dimer_sf"/>
</dbReference>
<dbReference type="InterPro" id="IPR006322">
    <property type="entry name" value="Glutathione_Rdtase_euk/bac"/>
</dbReference>
<dbReference type="InterPro" id="IPR046952">
    <property type="entry name" value="GSHR/TRXR-like"/>
</dbReference>
<dbReference type="InterPro" id="IPR001100">
    <property type="entry name" value="Pyr_nuc-diS_OxRdtase"/>
</dbReference>
<dbReference type="InterPro" id="IPR004099">
    <property type="entry name" value="Pyr_nucl-diS_OxRdtase_dimer"/>
</dbReference>
<dbReference type="InterPro" id="IPR012999">
    <property type="entry name" value="Pyr_OxRdtase_I_AS"/>
</dbReference>
<dbReference type="NCBIfam" id="TIGR01421">
    <property type="entry name" value="gluta_reduc_1"/>
    <property type="match status" value="1"/>
</dbReference>
<dbReference type="NCBIfam" id="NF004776">
    <property type="entry name" value="PRK06116.1"/>
    <property type="match status" value="1"/>
</dbReference>
<dbReference type="PANTHER" id="PTHR42737">
    <property type="entry name" value="GLUTATHIONE REDUCTASE"/>
    <property type="match status" value="1"/>
</dbReference>
<dbReference type="PANTHER" id="PTHR42737:SF2">
    <property type="entry name" value="GLUTATHIONE REDUCTASE"/>
    <property type="match status" value="1"/>
</dbReference>
<dbReference type="Pfam" id="PF07992">
    <property type="entry name" value="Pyr_redox_2"/>
    <property type="match status" value="1"/>
</dbReference>
<dbReference type="Pfam" id="PF02852">
    <property type="entry name" value="Pyr_redox_dim"/>
    <property type="match status" value="1"/>
</dbReference>
<dbReference type="PIRSF" id="PIRSF000350">
    <property type="entry name" value="Mercury_reductase_MerA"/>
    <property type="match status" value="1"/>
</dbReference>
<dbReference type="PRINTS" id="PR00368">
    <property type="entry name" value="FADPNR"/>
</dbReference>
<dbReference type="PRINTS" id="PR00411">
    <property type="entry name" value="PNDRDTASEI"/>
</dbReference>
<dbReference type="SUPFAM" id="SSF51905">
    <property type="entry name" value="FAD/NAD(P)-binding domain"/>
    <property type="match status" value="1"/>
</dbReference>
<dbReference type="SUPFAM" id="SSF55424">
    <property type="entry name" value="FAD/NAD-linked reductases, dimerisation (C-terminal) domain"/>
    <property type="match status" value="1"/>
</dbReference>
<dbReference type="PROSITE" id="PS00076">
    <property type="entry name" value="PYRIDINE_REDOX_1"/>
    <property type="match status" value="1"/>
</dbReference>
<keyword id="KW-0963">Cytoplasm</keyword>
<keyword id="KW-1015">Disulfide bond</keyword>
<keyword id="KW-0274">FAD</keyword>
<keyword id="KW-0285">Flavoprotein</keyword>
<keyword id="KW-0496">Mitochondrion</keyword>
<keyword id="KW-0521">NADP</keyword>
<keyword id="KW-0560">Oxidoreductase</keyword>
<keyword id="KW-0676">Redox-active center</keyword>
<keyword id="KW-1185">Reference proteome</keyword>
<evidence type="ECO:0000250" key="1">
    <source>
        <dbReference type="UniProtKB" id="P00390"/>
    </source>
</evidence>
<evidence type="ECO:0000250" key="2">
    <source>
        <dbReference type="UniProtKB" id="P06715"/>
    </source>
</evidence>
<evidence type="ECO:0000250" key="3">
    <source>
        <dbReference type="UniProtKB" id="P41921"/>
    </source>
</evidence>
<evidence type="ECO:0000305" key="4"/>
<reference key="1">
    <citation type="journal article" date="2004" name="Biochim. Biophys. Acta">
        <title>Isolation and characterization of two nuclear genes encoding glutathione and thioredoxin reductases from the yeast Kluyveromyces lactis.</title>
        <authorList>
            <person name="Tarrio N."/>
            <person name="Diaz Prado S."/>
            <person name="Cerdan M.E."/>
            <person name="Gonzales Siso M.I."/>
        </authorList>
    </citation>
    <scope>NUCLEOTIDE SEQUENCE [GENOMIC DNA]</scope>
    <scope>CHARACTERIZATION</scope>
</reference>
<reference key="2">
    <citation type="journal article" date="2004" name="Nature">
        <title>Genome evolution in yeasts.</title>
        <authorList>
            <person name="Dujon B."/>
            <person name="Sherman D."/>
            <person name="Fischer G."/>
            <person name="Durrens P."/>
            <person name="Casaregola S."/>
            <person name="Lafontaine I."/>
            <person name="de Montigny J."/>
            <person name="Marck C."/>
            <person name="Neuveglise C."/>
            <person name="Talla E."/>
            <person name="Goffard N."/>
            <person name="Frangeul L."/>
            <person name="Aigle M."/>
            <person name="Anthouard V."/>
            <person name="Babour A."/>
            <person name="Barbe V."/>
            <person name="Barnay S."/>
            <person name="Blanchin S."/>
            <person name="Beckerich J.-M."/>
            <person name="Beyne E."/>
            <person name="Bleykasten C."/>
            <person name="Boisrame A."/>
            <person name="Boyer J."/>
            <person name="Cattolico L."/>
            <person name="Confanioleri F."/>
            <person name="de Daruvar A."/>
            <person name="Despons L."/>
            <person name="Fabre E."/>
            <person name="Fairhead C."/>
            <person name="Ferry-Dumazet H."/>
            <person name="Groppi A."/>
            <person name="Hantraye F."/>
            <person name="Hennequin C."/>
            <person name="Jauniaux N."/>
            <person name="Joyet P."/>
            <person name="Kachouri R."/>
            <person name="Kerrest A."/>
            <person name="Koszul R."/>
            <person name="Lemaire M."/>
            <person name="Lesur I."/>
            <person name="Ma L."/>
            <person name="Muller H."/>
            <person name="Nicaud J.-M."/>
            <person name="Nikolski M."/>
            <person name="Oztas S."/>
            <person name="Ozier-Kalogeropoulos O."/>
            <person name="Pellenz S."/>
            <person name="Potier S."/>
            <person name="Richard G.-F."/>
            <person name="Straub M.-L."/>
            <person name="Suleau A."/>
            <person name="Swennen D."/>
            <person name="Tekaia F."/>
            <person name="Wesolowski-Louvel M."/>
            <person name="Westhof E."/>
            <person name="Wirth B."/>
            <person name="Zeniou-Meyer M."/>
            <person name="Zivanovic Y."/>
            <person name="Bolotin-Fukuhara M."/>
            <person name="Thierry A."/>
            <person name="Bouchier C."/>
            <person name="Caudron B."/>
            <person name="Scarpelli C."/>
            <person name="Gaillardin C."/>
            <person name="Weissenbach J."/>
            <person name="Wincker P."/>
            <person name="Souciet J.-L."/>
        </authorList>
    </citation>
    <scope>NUCLEOTIDE SEQUENCE [LARGE SCALE GENOMIC DNA]</scope>
    <source>
        <strain>ATCC 8585 / CBS 2359 / DSM 70799 / NBRC 1267 / NRRL Y-1140 / WM37</strain>
    </source>
</reference>
<feature type="chain" id="PRO_0000067968" description="Glutathione reductase">
    <location>
        <begin position="1"/>
        <end position="484"/>
    </location>
</feature>
<feature type="active site" description="Proton acceptor" evidence="1">
    <location>
        <position position="473"/>
    </location>
</feature>
<feature type="binding site" evidence="3">
    <location>
        <position position="32"/>
    </location>
    <ligand>
        <name>FAD</name>
        <dbReference type="ChEBI" id="CHEBI:57692"/>
    </ligand>
</feature>
<feature type="binding site" evidence="1">
    <location>
        <position position="32"/>
    </location>
    <ligand>
        <name>glutathione</name>
        <dbReference type="ChEBI" id="CHEBI:57925"/>
    </ligand>
</feature>
<feature type="binding site" evidence="3">
    <location>
        <position position="33"/>
    </location>
    <ligand>
        <name>FAD</name>
        <dbReference type="ChEBI" id="CHEBI:57692"/>
    </ligand>
</feature>
<feature type="binding site" evidence="1">
    <location>
        <position position="39"/>
    </location>
    <ligand>
        <name>glutathione</name>
        <dbReference type="ChEBI" id="CHEBI:57925"/>
    </ligand>
</feature>
<feature type="binding site" evidence="3">
    <location>
        <position position="52"/>
    </location>
    <ligand>
        <name>FAD</name>
        <dbReference type="ChEBI" id="CHEBI:57692"/>
    </ligand>
</feature>
<feature type="binding site" evidence="3">
    <location>
        <position position="59"/>
    </location>
    <ligand>
        <name>FAD</name>
        <dbReference type="ChEBI" id="CHEBI:57692"/>
    </ligand>
</feature>
<feature type="binding site" evidence="3">
    <location>
        <position position="60"/>
    </location>
    <ligand>
        <name>FAD</name>
        <dbReference type="ChEBI" id="CHEBI:57692"/>
    </ligand>
</feature>
<feature type="binding site" evidence="3">
    <location>
        <position position="68"/>
    </location>
    <ligand>
        <name>FAD</name>
        <dbReference type="ChEBI" id="CHEBI:57692"/>
    </ligand>
</feature>
<feature type="binding site" evidence="1">
    <location>
        <position position="122"/>
    </location>
    <ligand>
        <name>glutathione</name>
        <dbReference type="ChEBI" id="CHEBI:57925"/>
    </ligand>
</feature>
<feature type="binding site" evidence="3">
    <location>
        <position position="138"/>
    </location>
    <ligand>
        <name>FAD</name>
        <dbReference type="ChEBI" id="CHEBI:57692"/>
    </ligand>
</feature>
<feature type="binding site" evidence="2">
    <location>
        <position position="204"/>
    </location>
    <ligand>
        <name>NADP(+)</name>
        <dbReference type="ChEBI" id="CHEBI:58349"/>
    </ligand>
</feature>
<feature type="binding site" evidence="2">
    <location>
        <position position="207"/>
    </location>
    <ligand>
        <name>NADP(+)</name>
        <dbReference type="ChEBI" id="CHEBI:58349"/>
    </ligand>
</feature>
<feature type="binding site" evidence="2">
    <location>
        <position position="210"/>
    </location>
    <ligand>
        <name>NADP(+)</name>
        <dbReference type="ChEBI" id="CHEBI:58349"/>
    </ligand>
</feature>
<feature type="binding site" evidence="2">
    <location>
        <position position="227"/>
    </location>
    <ligand>
        <name>NADP(+)</name>
        <dbReference type="ChEBI" id="CHEBI:58349"/>
    </ligand>
</feature>
<feature type="binding site" evidence="2">
    <location>
        <position position="233"/>
    </location>
    <ligand>
        <name>NADP(+)</name>
        <dbReference type="ChEBI" id="CHEBI:58349"/>
    </ligand>
</feature>
<feature type="binding site" evidence="3">
    <location>
        <position position="242"/>
    </location>
    <ligand>
        <name>glutathione</name>
        <dbReference type="ChEBI" id="CHEBI:57925"/>
    </ligand>
</feature>
<feature type="binding site" evidence="2">
    <location>
        <position position="293"/>
    </location>
    <ligand>
        <name>NADP(+)</name>
        <dbReference type="ChEBI" id="CHEBI:58349"/>
    </ligand>
</feature>
<feature type="binding site" evidence="3">
    <location>
        <position position="333"/>
    </location>
    <ligand>
        <name>FAD</name>
        <dbReference type="ChEBI" id="CHEBI:57692"/>
    </ligand>
</feature>
<feature type="binding site" evidence="2">
    <location>
        <position position="339"/>
    </location>
    <ligand>
        <name>NADP(+)</name>
        <dbReference type="ChEBI" id="CHEBI:58349"/>
    </ligand>
</feature>
<feature type="binding site" evidence="3">
    <location>
        <position position="341"/>
    </location>
    <ligand>
        <name>FAD</name>
        <dbReference type="ChEBI" id="CHEBI:57692"/>
    </ligand>
</feature>
<feature type="binding site" evidence="1">
    <location>
        <position position="349"/>
    </location>
    <ligand>
        <name>glutathione</name>
        <dbReference type="ChEBI" id="CHEBI:57925"/>
    </ligand>
</feature>
<feature type="binding site" evidence="2">
    <location>
        <position position="374"/>
    </location>
    <ligand>
        <name>NADP(+)</name>
        <dbReference type="ChEBI" id="CHEBI:58349"/>
    </ligand>
</feature>
<feature type="binding site" evidence="3">
    <location>
        <position position="426"/>
    </location>
    <ligand>
        <name>glutathione</name>
        <dbReference type="ChEBI" id="CHEBI:57925"/>
    </ligand>
</feature>
<feature type="binding site" evidence="3">
    <location>
        <position position="473"/>
    </location>
    <ligand>
        <name>FAD</name>
        <dbReference type="ChEBI" id="CHEBI:57692"/>
    </ligand>
</feature>
<feature type="disulfide bond" description="Redox-active" evidence="3">
    <location>
        <begin position="60"/>
        <end position="65"/>
    </location>
</feature>
<organism>
    <name type="scientific">Kluyveromyces lactis (strain ATCC 8585 / CBS 2359 / DSM 70799 / NBRC 1267 / NRRL Y-1140 / WM37)</name>
    <name type="common">Yeast</name>
    <name type="synonym">Candida sphaerica</name>
    <dbReference type="NCBI Taxonomy" id="284590"/>
    <lineage>
        <taxon>Eukaryota</taxon>
        <taxon>Fungi</taxon>
        <taxon>Dikarya</taxon>
        <taxon>Ascomycota</taxon>
        <taxon>Saccharomycotina</taxon>
        <taxon>Saccharomycetes</taxon>
        <taxon>Saccharomycetales</taxon>
        <taxon>Saccharomycetaceae</taxon>
        <taxon>Kluyveromyces</taxon>
    </lineage>
</organism>
<name>GSHR_KLULA</name>
<accession>Q6HA23</accession>
<accession>Q6CM03</accession>
<proteinExistence type="evidence at protein level"/>
<protein>
    <recommendedName>
        <fullName>Glutathione reductase</fullName>
        <shortName>GR</shortName>
        <shortName>GRase</shortName>
        <ecNumber>1.8.1.7</ecNumber>
    </recommendedName>
</protein>
<comment type="function">
    <text evidence="3">Catalyzes the reduction of glutathione disulfide (GSSG) to reduced glutathione (GSH). Constitutes the major mechanism to maintain a high GSH:GSSG ratio in the cytosol.</text>
</comment>
<comment type="catalytic activity">
    <reaction evidence="3">
        <text>2 glutathione + NADP(+) = glutathione disulfide + NADPH + H(+)</text>
        <dbReference type="Rhea" id="RHEA:11740"/>
        <dbReference type="ChEBI" id="CHEBI:15378"/>
        <dbReference type="ChEBI" id="CHEBI:57783"/>
        <dbReference type="ChEBI" id="CHEBI:57925"/>
        <dbReference type="ChEBI" id="CHEBI:58297"/>
        <dbReference type="ChEBI" id="CHEBI:58349"/>
        <dbReference type="EC" id="1.8.1.7"/>
    </reaction>
</comment>
<comment type="cofactor">
    <cofactor evidence="3">
        <name>FAD</name>
        <dbReference type="ChEBI" id="CHEBI:57692"/>
    </cofactor>
    <text evidence="3">Binds 1 FAD per subunit.</text>
</comment>
<comment type="subunit">
    <text evidence="3">Homodimer.</text>
</comment>
<comment type="subcellular location">
    <subcellularLocation>
        <location evidence="3">Cytoplasm</location>
    </subcellularLocation>
    <subcellularLocation>
        <location evidence="3">Mitochondrion</location>
    </subcellularLocation>
</comment>
<comment type="miscellaneous">
    <text evidence="3">The active site is a redox-active disulfide bond.</text>
</comment>
<comment type="similarity">
    <text evidence="4">Belongs to the class-I pyridine nucleotide-disulfide oxidoreductase family.</text>
</comment>